<name>EPHA6_HUMAN</name>
<proteinExistence type="evidence at protein level"/>
<protein>
    <recommendedName>
        <fullName>Ephrin type-A receptor 6</fullName>
        <ecNumber>2.7.10.1</ecNumber>
    </recommendedName>
    <alternativeName>
        <fullName>EPH homology kinase 2</fullName>
        <shortName>EHK-2</shortName>
    </alternativeName>
    <alternativeName>
        <fullName>EPH-like kinase 12</fullName>
        <shortName>EK12</shortName>
    </alternativeName>
</protein>
<gene>
    <name type="primary">EPHA6</name>
    <name type="synonym">EHK2</name>
    <name type="synonym">HEK12</name>
</gene>
<evidence type="ECO:0000250" key="1"/>
<evidence type="ECO:0000250" key="2">
    <source>
        <dbReference type="UniProtKB" id="Q62413"/>
    </source>
</evidence>
<evidence type="ECO:0000255" key="3"/>
<evidence type="ECO:0000255" key="4">
    <source>
        <dbReference type="PROSITE-ProRule" id="PRU00159"/>
    </source>
</evidence>
<evidence type="ECO:0000255" key="5">
    <source>
        <dbReference type="PROSITE-ProRule" id="PRU00184"/>
    </source>
</evidence>
<evidence type="ECO:0000255" key="6">
    <source>
        <dbReference type="PROSITE-ProRule" id="PRU00316"/>
    </source>
</evidence>
<evidence type="ECO:0000255" key="7">
    <source>
        <dbReference type="PROSITE-ProRule" id="PRU00883"/>
    </source>
</evidence>
<evidence type="ECO:0000255" key="8">
    <source>
        <dbReference type="PROSITE-ProRule" id="PRU10028"/>
    </source>
</evidence>
<evidence type="ECO:0000269" key="9">
    <source>
    </source>
</evidence>
<evidence type="ECO:0000269" key="10">
    <source>
    </source>
</evidence>
<evidence type="ECO:0000303" key="11">
    <source>
    </source>
</evidence>
<evidence type="ECO:0000305" key="12"/>
<feature type="signal peptide" evidence="3">
    <location>
        <begin position="1"/>
        <end position="22"/>
    </location>
</feature>
<feature type="chain" id="PRO_0000235684" description="Ephrin type-A receptor 6">
    <location>
        <begin position="23"/>
        <end position="1036"/>
    </location>
</feature>
<feature type="topological domain" description="Extracellular" evidence="3">
    <location>
        <begin position="23"/>
        <end position="550"/>
    </location>
</feature>
<feature type="transmembrane region" description="Helical" evidence="3">
    <location>
        <begin position="551"/>
        <end position="571"/>
    </location>
</feature>
<feature type="topological domain" description="Cytoplasmic" evidence="3">
    <location>
        <begin position="572"/>
        <end position="1036"/>
    </location>
</feature>
<feature type="domain" description="Eph LBD" evidence="7">
    <location>
        <begin position="34"/>
        <end position="212"/>
    </location>
</feature>
<feature type="domain" description="Fibronectin type-III 1" evidence="6">
    <location>
        <begin position="331"/>
        <end position="441"/>
    </location>
</feature>
<feature type="domain" description="Fibronectin type-III 2" evidence="6">
    <location>
        <begin position="442"/>
        <end position="537"/>
    </location>
</feature>
<feature type="domain" description="Protein kinase" evidence="4">
    <location>
        <begin position="631"/>
        <end position="944"/>
    </location>
</feature>
<feature type="domain" description="SAM" evidence="5">
    <location>
        <begin position="961"/>
        <end position="1025"/>
    </location>
</feature>
<feature type="short sequence motif" description="PDZ-binding" evidence="3">
    <location>
        <begin position="1034"/>
        <end position="1036"/>
    </location>
</feature>
<feature type="active site" description="Proton acceptor" evidence="4 8">
    <location>
        <position position="798"/>
    </location>
</feature>
<feature type="binding site" evidence="4">
    <location>
        <begin position="637"/>
        <end position="645"/>
    </location>
    <ligand>
        <name>ATP</name>
        <dbReference type="ChEBI" id="CHEBI:30616"/>
    </ligand>
</feature>
<feature type="binding site" evidence="4">
    <location>
        <position position="663"/>
    </location>
    <ligand>
        <name>ATP</name>
        <dbReference type="ChEBI" id="CHEBI:30616"/>
    </ligand>
</feature>
<feature type="modified residue" description="Phosphotyrosine; by autocatalysis" evidence="3">
    <location>
        <position position="606"/>
    </location>
</feature>
<feature type="modified residue" description="Phosphotyrosine; by autocatalysis" evidence="3">
    <location>
        <position position="612"/>
    </location>
</feature>
<feature type="modified residue" description="Phosphotyrosine; by autocatalysis" evidence="3">
    <location>
        <position position="831"/>
    </location>
</feature>
<feature type="modified residue" description="Phosphotyrosine; by autocatalysis" evidence="3">
    <location>
        <position position="978"/>
    </location>
</feature>
<feature type="glycosylation site" description="N-linked (GlcNAc...) asparagine" evidence="3">
    <location>
        <position position="343"/>
    </location>
</feature>
<feature type="glycosylation site" description="N-linked (GlcNAc...) asparagine" evidence="3">
    <location>
        <position position="397"/>
    </location>
</feature>
<feature type="glycosylation site" description="N-linked (GlcNAc...) asparagine" evidence="3">
    <location>
        <position position="410"/>
    </location>
</feature>
<feature type="splice variant" id="VSP_018473" description="In isoform 2 and isoform 3." evidence="11">
    <location>
        <begin position="1"/>
        <end position="514"/>
    </location>
</feature>
<feature type="splice variant" id="VSP_018474" description="In isoform 2 and isoform 3." evidence="11">
    <original>IRVRTATGYSGYSQKFEFETGDET</original>
    <variation>MKDSPFQVTKLYWLNEKWDFIASA</variation>
    <location>
        <begin position="515"/>
        <end position="538"/>
    </location>
</feature>
<feature type="splice variant" id="VSP_054716" description="In isoform 3." evidence="12">
    <original>GGKIPIRWTAPEAIAYRKFSSASDAWSYGIVMWEVMSYGERPYWEMSNQDVILSIEEGYRLPAPMGCPASLHQLMLHC</original>
    <variation>RPTNHNKEQSELVKEDGLESLCEQCESSSGYGTGLVLMWKRNRRAMGASGQTRKQCDKRDNPPTDLFQTLTLNLCYSA</variation>
    <location>
        <begin position="835"/>
        <end position="912"/>
    </location>
</feature>
<feature type="splice variant" id="VSP_018475" description="In isoform 2." evidence="11">
    <original>GGKIPIRWTAPEAI</original>
    <variation>DLFQTLTLNLCYSA</variation>
    <location>
        <begin position="835"/>
        <end position="848"/>
    </location>
</feature>
<feature type="splice variant" id="VSP_018476" description="In isoform 2." evidence="11">
    <location>
        <begin position="849"/>
        <end position="1036"/>
    </location>
</feature>
<feature type="splice variant" id="VSP_054717" description="In isoform 3." evidence="12">
    <location>
        <begin position="913"/>
        <end position="1036"/>
    </location>
</feature>
<feature type="sequence variant" id="VAR_042149" evidence="10">
    <original>F</original>
    <variation>S</variation>
    <location>
        <position position="704"/>
    </location>
</feature>
<feature type="sequence variant" id="VAR_055991" description="In dbSNP:rs4857276.">
    <original>A</original>
    <variation>V</variation>
    <location>
        <position position="711"/>
    </location>
</feature>
<keyword id="KW-0025">Alternative splicing</keyword>
<keyword id="KW-0067">ATP-binding</keyword>
<keyword id="KW-0325">Glycoprotein</keyword>
<keyword id="KW-0418">Kinase</keyword>
<keyword id="KW-0472">Membrane</keyword>
<keyword id="KW-0547">Nucleotide-binding</keyword>
<keyword id="KW-0597">Phosphoprotein</keyword>
<keyword id="KW-1267">Proteomics identification</keyword>
<keyword id="KW-0675">Receptor</keyword>
<keyword id="KW-1185">Reference proteome</keyword>
<keyword id="KW-0677">Repeat</keyword>
<keyword id="KW-0732">Signal</keyword>
<keyword id="KW-0808">Transferase</keyword>
<keyword id="KW-0812">Transmembrane</keyword>
<keyword id="KW-1133">Transmembrane helix</keyword>
<keyword id="KW-0829">Tyrosine-protein kinase</keyword>
<dbReference type="EC" id="2.7.10.1"/>
<dbReference type="EMBL" id="AL133666">
    <property type="protein sequence ID" value="CAB63775.1"/>
    <property type="molecule type" value="mRNA"/>
</dbReference>
<dbReference type="EMBL" id="AC109782">
    <property type="status" value="NOT_ANNOTATED_CDS"/>
    <property type="molecule type" value="Genomic_DNA"/>
</dbReference>
<dbReference type="EMBL" id="AC108714">
    <property type="status" value="NOT_ANNOTATED_CDS"/>
    <property type="molecule type" value="Genomic_DNA"/>
</dbReference>
<dbReference type="EMBL" id="AC110717">
    <property type="status" value="NOT_ANNOTATED_CDS"/>
    <property type="molecule type" value="Genomic_DNA"/>
</dbReference>
<dbReference type="EMBL" id="AC134730">
    <property type="status" value="NOT_ANNOTATED_CDS"/>
    <property type="molecule type" value="Genomic_DNA"/>
</dbReference>
<dbReference type="EMBL" id="AC135369">
    <property type="status" value="NOT_ANNOTATED_CDS"/>
    <property type="molecule type" value="Genomic_DNA"/>
</dbReference>
<dbReference type="EMBL" id="AC119745">
    <property type="status" value="NOT_ANNOTATED_CDS"/>
    <property type="molecule type" value="Genomic_DNA"/>
</dbReference>
<dbReference type="EMBL" id="AC107482">
    <property type="status" value="NOT_ANNOTATED_CDS"/>
    <property type="molecule type" value="Genomic_DNA"/>
</dbReference>
<dbReference type="EMBL" id="AC117470">
    <property type="status" value="NOT_ANNOTATED_CDS"/>
    <property type="molecule type" value="Genomic_DNA"/>
</dbReference>
<dbReference type="EMBL" id="AC130510">
    <property type="status" value="NOT_ANNOTATED_CDS"/>
    <property type="molecule type" value="Genomic_DNA"/>
</dbReference>
<dbReference type="EMBL" id="AC117439">
    <property type="status" value="NOT_ANNOTATED_CDS"/>
    <property type="molecule type" value="Genomic_DNA"/>
</dbReference>
<dbReference type="CCDS" id="CCDS54616.1">
    <molecule id="Q9UF33-2"/>
</dbReference>
<dbReference type="CCDS" id="CCDS63697.1">
    <molecule id="Q9UF33-3"/>
</dbReference>
<dbReference type="PIR" id="T43450">
    <property type="entry name" value="T43450"/>
</dbReference>
<dbReference type="RefSeq" id="NP_001265229.1">
    <molecule id="Q9UF33-3"/>
    <property type="nucleotide sequence ID" value="NM_001278300.2"/>
</dbReference>
<dbReference type="RefSeq" id="NP_775926.1">
    <molecule id="Q9UF33-2"/>
    <property type="nucleotide sequence ID" value="NM_173655.4"/>
</dbReference>
<dbReference type="SMR" id="Q9UF33"/>
<dbReference type="BioGRID" id="130049">
    <property type="interactions" value="44"/>
</dbReference>
<dbReference type="FunCoup" id="Q9UF33">
    <property type="interactions" value="591"/>
</dbReference>
<dbReference type="IntAct" id="Q9UF33">
    <property type="interactions" value="39"/>
</dbReference>
<dbReference type="MINT" id="Q9UF33"/>
<dbReference type="STRING" id="9606.ENSP00000374323"/>
<dbReference type="BindingDB" id="Q9UF33"/>
<dbReference type="ChEMBL" id="CHEMBL4526"/>
<dbReference type="DrugBank" id="DB12010">
    <property type="generic name" value="Fostamatinib"/>
</dbReference>
<dbReference type="DrugCentral" id="Q9UF33"/>
<dbReference type="GlyCosmos" id="Q9UF33">
    <property type="glycosylation" value="3 sites, No reported glycans"/>
</dbReference>
<dbReference type="GlyGen" id="Q9UF33">
    <property type="glycosylation" value="3 sites"/>
</dbReference>
<dbReference type="iPTMnet" id="Q9UF33"/>
<dbReference type="PhosphoSitePlus" id="Q9UF33"/>
<dbReference type="SwissPalm" id="Q9UF33"/>
<dbReference type="BioMuta" id="EPHA6"/>
<dbReference type="DMDM" id="97048747"/>
<dbReference type="jPOST" id="Q9UF33"/>
<dbReference type="MassIVE" id="Q9UF33"/>
<dbReference type="PaxDb" id="9606-ENSP00000374323"/>
<dbReference type="PeptideAtlas" id="Q9UF33"/>
<dbReference type="ProteomicsDB" id="13364"/>
<dbReference type="ProteomicsDB" id="84168">
    <molecule id="Q9UF33-1"/>
</dbReference>
<dbReference type="ProteomicsDB" id="84169">
    <molecule id="Q9UF33-2"/>
</dbReference>
<dbReference type="Antibodypedia" id="32095">
    <property type="antibodies" value="408 antibodies from 35 providers"/>
</dbReference>
<dbReference type="DNASU" id="285220"/>
<dbReference type="Ensembl" id="ENST00000502694.1">
    <molecule id="Q9UF33-2"/>
    <property type="protein sequence ID" value="ENSP00000423950.1"/>
    <property type="gene ID" value="ENSG00000080224.18"/>
</dbReference>
<dbReference type="Ensembl" id="ENST00000514100.5">
    <molecule id="Q9UF33-3"/>
    <property type="protein sequence ID" value="ENSP00000421711.1"/>
    <property type="gene ID" value="ENSG00000080224.18"/>
</dbReference>
<dbReference type="GeneID" id="285220"/>
<dbReference type="KEGG" id="hsa:285220"/>
<dbReference type="UCSC" id="uc003drr.6">
    <molecule id="Q9UF33-1"/>
    <property type="organism name" value="human"/>
</dbReference>
<dbReference type="AGR" id="HGNC:19296"/>
<dbReference type="CTD" id="285220"/>
<dbReference type="DisGeNET" id="285220"/>
<dbReference type="GeneCards" id="EPHA6"/>
<dbReference type="HGNC" id="HGNC:19296">
    <property type="gene designation" value="EPHA6"/>
</dbReference>
<dbReference type="HPA" id="ENSG00000080224">
    <property type="expression patterns" value="Tissue enhanced (ovary, testis)"/>
</dbReference>
<dbReference type="MIM" id="600066">
    <property type="type" value="gene"/>
</dbReference>
<dbReference type="neXtProt" id="NX_Q9UF33"/>
<dbReference type="OpenTargets" id="ENSG00000080224"/>
<dbReference type="PharmGKB" id="PA134866684"/>
<dbReference type="VEuPathDB" id="HostDB:ENSG00000080224"/>
<dbReference type="eggNOG" id="KOG0196">
    <property type="taxonomic scope" value="Eukaryota"/>
</dbReference>
<dbReference type="GeneTree" id="ENSGT00940000154490"/>
<dbReference type="HOGENOM" id="CLU_000288_141_5_1"/>
<dbReference type="InParanoid" id="Q9UF33"/>
<dbReference type="OrthoDB" id="4062651at2759"/>
<dbReference type="PAN-GO" id="Q9UF33">
    <property type="GO annotations" value="8 GO annotations based on evolutionary models"/>
</dbReference>
<dbReference type="PathwayCommons" id="Q9UF33"/>
<dbReference type="Reactome" id="R-HSA-2682334">
    <property type="pathway name" value="EPH-Ephrin signaling"/>
</dbReference>
<dbReference type="Reactome" id="R-HSA-3928663">
    <property type="pathway name" value="EPHA-mediated growth cone collapse"/>
</dbReference>
<dbReference type="Reactome" id="R-HSA-3928665">
    <property type="pathway name" value="EPH-ephrin mediated repulsion of cells"/>
</dbReference>
<dbReference type="SignaLink" id="Q9UF33"/>
<dbReference type="SIGNOR" id="Q9UF33"/>
<dbReference type="BioGRID-ORCS" id="285220">
    <property type="hits" value="7 hits in 1172 CRISPR screens"/>
</dbReference>
<dbReference type="ChiTaRS" id="EPHA6">
    <property type="organism name" value="human"/>
</dbReference>
<dbReference type="GeneWiki" id="EPHA6"/>
<dbReference type="GenomeRNAi" id="285220"/>
<dbReference type="Pharos" id="Q9UF33">
    <property type="development level" value="Tchem"/>
</dbReference>
<dbReference type="PRO" id="PR:Q9UF33"/>
<dbReference type="Proteomes" id="UP000005640">
    <property type="component" value="Chromosome 3"/>
</dbReference>
<dbReference type="RNAct" id="Q9UF33">
    <property type="molecule type" value="protein"/>
</dbReference>
<dbReference type="Bgee" id="ENSG00000080224">
    <property type="expression patterns" value="Expressed in left testis and 91 other cell types or tissues"/>
</dbReference>
<dbReference type="ExpressionAtlas" id="Q9UF33">
    <property type="expression patterns" value="baseline and differential"/>
</dbReference>
<dbReference type="GO" id="GO:0030425">
    <property type="term" value="C:dendrite"/>
    <property type="evidence" value="ECO:0000318"/>
    <property type="project" value="GO_Central"/>
</dbReference>
<dbReference type="GO" id="GO:0005886">
    <property type="term" value="C:plasma membrane"/>
    <property type="evidence" value="ECO:0000318"/>
    <property type="project" value="GO_Central"/>
</dbReference>
<dbReference type="GO" id="GO:0005524">
    <property type="term" value="F:ATP binding"/>
    <property type="evidence" value="ECO:0007669"/>
    <property type="project" value="UniProtKB-KW"/>
</dbReference>
<dbReference type="GO" id="GO:0005005">
    <property type="term" value="F:transmembrane-ephrin receptor activity"/>
    <property type="evidence" value="ECO:0000318"/>
    <property type="project" value="GO_Central"/>
</dbReference>
<dbReference type="GO" id="GO:0007411">
    <property type="term" value="P:axon guidance"/>
    <property type="evidence" value="ECO:0000318"/>
    <property type="project" value="GO_Central"/>
</dbReference>
<dbReference type="GO" id="GO:0048013">
    <property type="term" value="P:ephrin receptor signaling pathway"/>
    <property type="evidence" value="ECO:0000318"/>
    <property type="project" value="GO_Central"/>
</dbReference>
<dbReference type="CDD" id="cd10484">
    <property type="entry name" value="EphR_LBD_A6"/>
    <property type="match status" value="1"/>
</dbReference>
<dbReference type="CDD" id="cd00063">
    <property type="entry name" value="FN3"/>
    <property type="match status" value="2"/>
</dbReference>
<dbReference type="CDD" id="cd05066">
    <property type="entry name" value="PTKc_EphR_A"/>
    <property type="match status" value="1"/>
</dbReference>
<dbReference type="CDD" id="cd09547">
    <property type="entry name" value="SAM_EPH-A6"/>
    <property type="match status" value="1"/>
</dbReference>
<dbReference type="FunFam" id="1.10.510.10:FF:000083">
    <property type="entry name" value="Ephrin type-A receptor 3"/>
    <property type="match status" value="1"/>
</dbReference>
<dbReference type="FunFam" id="1.10.150.50:FF:000001">
    <property type="entry name" value="Ephrin type-A receptor 5"/>
    <property type="match status" value="1"/>
</dbReference>
<dbReference type="FunFam" id="2.10.50.10:FF:000001">
    <property type="entry name" value="Ephrin type-A receptor 5"/>
    <property type="match status" value="1"/>
</dbReference>
<dbReference type="FunFam" id="2.60.40.1770:FF:000001">
    <property type="entry name" value="Ephrin type-A receptor 5"/>
    <property type="match status" value="1"/>
</dbReference>
<dbReference type="FunFam" id="3.30.200.20:FF:000001">
    <property type="entry name" value="Ephrin type-A receptor 5"/>
    <property type="match status" value="1"/>
</dbReference>
<dbReference type="FunFam" id="2.60.40.10:FF:001483">
    <property type="entry name" value="Ephrin type-A receptor 6"/>
    <property type="match status" value="1"/>
</dbReference>
<dbReference type="FunFam" id="2.60.120.260:FF:000001">
    <property type="entry name" value="Ephrin type-A receptor 7"/>
    <property type="match status" value="1"/>
</dbReference>
<dbReference type="FunFam" id="2.60.40.10:FF:000190">
    <property type="entry name" value="Ephrin type-A receptor 7"/>
    <property type="match status" value="1"/>
</dbReference>
<dbReference type="Gene3D" id="2.60.40.1770">
    <property type="entry name" value="ephrin a2 ectodomain"/>
    <property type="match status" value="1"/>
</dbReference>
<dbReference type="Gene3D" id="2.60.120.260">
    <property type="entry name" value="Galactose-binding domain-like"/>
    <property type="match status" value="1"/>
</dbReference>
<dbReference type="Gene3D" id="2.60.40.10">
    <property type="entry name" value="Immunoglobulins"/>
    <property type="match status" value="2"/>
</dbReference>
<dbReference type="Gene3D" id="3.30.200.20">
    <property type="entry name" value="Phosphorylase Kinase, domain 1"/>
    <property type="match status" value="1"/>
</dbReference>
<dbReference type="Gene3D" id="1.10.150.50">
    <property type="entry name" value="Transcription Factor, Ets-1"/>
    <property type="match status" value="1"/>
</dbReference>
<dbReference type="Gene3D" id="1.10.510.10">
    <property type="entry name" value="Transferase(Phosphotransferase) domain 1"/>
    <property type="match status" value="1"/>
</dbReference>
<dbReference type="Gene3D" id="2.10.50.10">
    <property type="entry name" value="Tumor Necrosis Factor Receptor, subunit A, domain 2"/>
    <property type="match status" value="1"/>
</dbReference>
<dbReference type="InterPro" id="IPR042746">
    <property type="entry name" value="EPH-A6_SAM"/>
</dbReference>
<dbReference type="InterPro" id="IPR027936">
    <property type="entry name" value="Eph_TM"/>
</dbReference>
<dbReference type="InterPro" id="IPR034280">
    <property type="entry name" value="EphA6_rcpt_lig-bd"/>
</dbReference>
<dbReference type="InterPro" id="IPR001090">
    <property type="entry name" value="Ephrin_rcpt_lig-bd_dom"/>
</dbReference>
<dbReference type="InterPro" id="IPR050449">
    <property type="entry name" value="Ephrin_rcpt_TKs"/>
</dbReference>
<dbReference type="InterPro" id="IPR003961">
    <property type="entry name" value="FN3_dom"/>
</dbReference>
<dbReference type="InterPro" id="IPR036116">
    <property type="entry name" value="FN3_sf"/>
</dbReference>
<dbReference type="InterPro" id="IPR008979">
    <property type="entry name" value="Galactose-bd-like_sf"/>
</dbReference>
<dbReference type="InterPro" id="IPR009030">
    <property type="entry name" value="Growth_fac_rcpt_cys_sf"/>
</dbReference>
<dbReference type="InterPro" id="IPR013783">
    <property type="entry name" value="Ig-like_fold"/>
</dbReference>
<dbReference type="InterPro" id="IPR011009">
    <property type="entry name" value="Kinase-like_dom_sf"/>
</dbReference>
<dbReference type="InterPro" id="IPR000719">
    <property type="entry name" value="Prot_kinase_dom"/>
</dbReference>
<dbReference type="InterPro" id="IPR017441">
    <property type="entry name" value="Protein_kinase_ATP_BS"/>
</dbReference>
<dbReference type="InterPro" id="IPR001660">
    <property type="entry name" value="SAM"/>
</dbReference>
<dbReference type="InterPro" id="IPR013761">
    <property type="entry name" value="SAM/pointed_sf"/>
</dbReference>
<dbReference type="InterPro" id="IPR001245">
    <property type="entry name" value="Ser-Thr/Tyr_kinase_cat_dom"/>
</dbReference>
<dbReference type="InterPro" id="IPR011641">
    <property type="entry name" value="Tyr-kin_ephrin_A/B_rcpt-like"/>
</dbReference>
<dbReference type="InterPro" id="IPR008266">
    <property type="entry name" value="Tyr_kinase_AS"/>
</dbReference>
<dbReference type="InterPro" id="IPR020635">
    <property type="entry name" value="Tyr_kinase_cat_dom"/>
</dbReference>
<dbReference type="InterPro" id="IPR016257">
    <property type="entry name" value="Tyr_kinase_ephrin_rcpt"/>
</dbReference>
<dbReference type="InterPro" id="IPR001426">
    <property type="entry name" value="Tyr_kinase_rcpt_V_CS"/>
</dbReference>
<dbReference type="PANTHER" id="PTHR46877">
    <property type="entry name" value="EPH RECEPTOR A5"/>
    <property type="match status" value="1"/>
</dbReference>
<dbReference type="PANTHER" id="PTHR46877:SF10">
    <property type="entry name" value="EPHRIN TYPE-A RECEPTOR 6"/>
    <property type="match status" value="1"/>
</dbReference>
<dbReference type="Pfam" id="PF14575">
    <property type="entry name" value="EphA2_TM"/>
    <property type="match status" value="1"/>
</dbReference>
<dbReference type="Pfam" id="PF01404">
    <property type="entry name" value="Ephrin_lbd"/>
    <property type="match status" value="1"/>
</dbReference>
<dbReference type="Pfam" id="PF07699">
    <property type="entry name" value="Ephrin_rec_like"/>
    <property type="match status" value="1"/>
</dbReference>
<dbReference type="Pfam" id="PF00041">
    <property type="entry name" value="fn3"/>
    <property type="match status" value="2"/>
</dbReference>
<dbReference type="Pfam" id="PF07714">
    <property type="entry name" value="PK_Tyr_Ser-Thr"/>
    <property type="match status" value="2"/>
</dbReference>
<dbReference type="Pfam" id="PF00536">
    <property type="entry name" value="SAM_1"/>
    <property type="match status" value="1"/>
</dbReference>
<dbReference type="PIRSF" id="PIRSF000666">
    <property type="entry name" value="TyrPK_ephrin_receptor"/>
    <property type="match status" value="1"/>
</dbReference>
<dbReference type="PRINTS" id="PR00014">
    <property type="entry name" value="FNTYPEIII"/>
</dbReference>
<dbReference type="PRINTS" id="PR00109">
    <property type="entry name" value="TYRKINASE"/>
</dbReference>
<dbReference type="SMART" id="SM00615">
    <property type="entry name" value="EPH_lbd"/>
    <property type="match status" value="1"/>
</dbReference>
<dbReference type="SMART" id="SM01411">
    <property type="entry name" value="Ephrin_rec_like"/>
    <property type="match status" value="1"/>
</dbReference>
<dbReference type="SMART" id="SM00060">
    <property type="entry name" value="FN3"/>
    <property type="match status" value="2"/>
</dbReference>
<dbReference type="SMART" id="SM00454">
    <property type="entry name" value="SAM"/>
    <property type="match status" value="1"/>
</dbReference>
<dbReference type="SMART" id="SM00219">
    <property type="entry name" value="TyrKc"/>
    <property type="match status" value="1"/>
</dbReference>
<dbReference type="SUPFAM" id="SSF49265">
    <property type="entry name" value="Fibronectin type III"/>
    <property type="match status" value="1"/>
</dbReference>
<dbReference type="SUPFAM" id="SSF49785">
    <property type="entry name" value="Galactose-binding domain-like"/>
    <property type="match status" value="1"/>
</dbReference>
<dbReference type="SUPFAM" id="SSF57184">
    <property type="entry name" value="Growth factor receptor domain"/>
    <property type="match status" value="1"/>
</dbReference>
<dbReference type="SUPFAM" id="SSF56112">
    <property type="entry name" value="Protein kinase-like (PK-like)"/>
    <property type="match status" value="1"/>
</dbReference>
<dbReference type="SUPFAM" id="SSF47769">
    <property type="entry name" value="SAM/Pointed domain"/>
    <property type="match status" value="1"/>
</dbReference>
<dbReference type="PROSITE" id="PS51550">
    <property type="entry name" value="EPH_LBD"/>
    <property type="match status" value="1"/>
</dbReference>
<dbReference type="PROSITE" id="PS50853">
    <property type="entry name" value="FN3"/>
    <property type="match status" value="2"/>
</dbReference>
<dbReference type="PROSITE" id="PS00107">
    <property type="entry name" value="PROTEIN_KINASE_ATP"/>
    <property type="match status" value="1"/>
</dbReference>
<dbReference type="PROSITE" id="PS50011">
    <property type="entry name" value="PROTEIN_KINASE_DOM"/>
    <property type="match status" value="1"/>
</dbReference>
<dbReference type="PROSITE" id="PS00109">
    <property type="entry name" value="PROTEIN_KINASE_TYR"/>
    <property type="match status" value="1"/>
</dbReference>
<dbReference type="PROSITE" id="PS00790">
    <property type="entry name" value="RECEPTOR_TYR_KIN_V_1"/>
    <property type="match status" value="1"/>
</dbReference>
<dbReference type="PROSITE" id="PS00791">
    <property type="entry name" value="RECEPTOR_TYR_KIN_V_2"/>
    <property type="match status" value="1"/>
</dbReference>
<dbReference type="PROSITE" id="PS50105">
    <property type="entry name" value="SAM_DOMAIN"/>
    <property type="match status" value="1"/>
</dbReference>
<accession>Q9UF33</accession>
<accession>D6RAL5</accession>
<sequence length="1036" mass="116379">MGGCEVREFLLQFGFFLPLLTAWPGDCSHVSNNQVVLLDTTTVLGELGWKTYPLNGWDAITEMDEHNRPIHTYQVCNVMEPNQNNWLRTNWISRDAAQKIYVEMKFTLRDCNSIPWVLGTCKETFNLFYMESDESHGIKFKPNQYTKIDTIAADESFTQMDLGDRILKLNTEIREVGPIERKGFYLAFQDIGACIALVSVRVFYKKCPFTVRNLAMFPDTIPRVDSSSLVEVRGSCVKSAEERDTPKLYCGADGDWLVPLGRCICSTGYEEIEGSCHACRPGFYKAFAGNTKCSKCPPHSLTYMEATSVCQCEKGYFRAEKDPPSMACTRPPSAPRNVVFNINETALILEWSPPSDTGGRKDLTYSVICKKCGLDTSQCEDCGGGLRFIPRHTGLINNSVIVLDFVSHVNYTFEIEAMNGVSELSFSPKPFTAITVTTDQDAPSLIGVVRKDWASQNSIALSWQAPAFSNGAILDYEIKYYEKEHEQLTYSSTRSKAPSVIITGLKPATKYVFHIRVRTATGYSGYSQKFEFETGDETSDMAAEQGQILVIATAAVGGFTLLVILTLFFLITGRCQWYIKAKMKSEEKRRNHLQNGHLRFPGIKTYIDPDTYEDPSLAVHEFAKEIDPSRIRIERVIGAGEFGEVCSGRLKTPGKREIPVAIKTLKGGHMDRQRRDFLREASIMGQFDHPNIIRLEGVVTKRSFPAIGVEAFCPSFLRAGFLNSIQAPHPVPGGGSLPPRIPAGRPVMIVVEYMENGSLDSFLRKHDGHFTVIQLVGMLRGIASGMKYLSDMGYVHRDLAARNILVNSNLVCKVSDFGLSRVLEDDPEAAYTTTGGKIPIRWTAPEAIAYRKFSSASDAWSYGIVMWEVMSYGERPYWEMSNQDVILSIEEGYRLPAPMGCPASLHQLMLHCWQKERNHRPKFTDIVSFLDKLIRNPSALHTLVEDILVMPESPGEVPEYPLFVTVGDWLDSIKMGQYKNNFVAAGFTTFDLISRMSIDDIRRIGVILIGHQRRIVSSIQTLRLHMMHIQEKGFHV</sequence>
<organism>
    <name type="scientific">Homo sapiens</name>
    <name type="common">Human</name>
    <dbReference type="NCBI Taxonomy" id="9606"/>
    <lineage>
        <taxon>Eukaryota</taxon>
        <taxon>Metazoa</taxon>
        <taxon>Chordata</taxon>
        <taxon>Craniata</taxon>
        <taxon>Vertebrata</taxon>
        <taxon>Euteleostomi</taxon>
        <taxon>Mammalia</taxon>
        <taxon>Eutheria</taxon>
        <taxon>Euarchontoglires</taxon>
        <taxon>Primates</taxon>
        <taxon>Haplorrhini</taxon>
        <taxon>Catarrhini</taxon>
        <taxon>Hominidae</taxon>
        <taxon>Homo</taxon>
    </lineage>
</organism>
<reference key="1">
    <citation type="journal article" date="2007" name="BMC Genomics">
        <title>The full-ORF clone resource of the German cDNA consortium.</title>
        <authorList>
            <person name="Bechtel S."/>
            <person name="Rosenfelder H."/>
            <person name="Duda A."/>
            <person name="Schmidt C.P."/>
            <person name="Ernst U."/>
            <person name="Wellenreuther R."/>
            <person name="Mehrle A."/>
            <person name="Schuster C."/>
            <person name="Bahr A."/>
            <person name="Bloecker H."/>
            <person name="Heubner D."/>
            <person name="Hoerlein A."/>
            <person name="Michel G."/>
            <person name="Wedler H."/>
            <person name="Koehrer K."/>
            <person name="Ottenwaelder B."/>
            <person name="Poustka A."/>
            <person name="Wiemann S."/>
            <person name="Schupp I."/>
        </authorList>
    </citation>
    <scope>NUCLEOTIDE SEQUENCE [LARGE SCALE MRNA] (ISOFORM 2)</scope>
    <source>
        <tissue>Testis</tissue>
    </source>
</reference>
<reference key="2">
    <citation type="journal article" date="2006" name="Nature">
        <title>The DNA sequence, annotation and analysis of human chromosome 3.</title>
        <authorList>
            <person name="Muzny D.M."/>
            <person name="Scherer S.E."/>
            <person name="Kaul R."/>
            <person name="Wang J."/>
            <person name="Yu J."/>
            <person name="Sudbrak R."/>
            <person name="Buhay C.J."/>
            <person name="Chen R."/>
            <person name="Cree A."/>
            <person name="Ding Y."/>
            <person name="Dugan-Rocha S."/>
            <person name="Gill R."/>
            <person name="Gunaratne P."/>
            <person name="Harris R.A."/>
            <person name="Hawes A.C."/>
            <person name="Hernandez J."/>
            <person name="Hodgson A.V."/>
            <person name="Hume J."/>
            <person name="Jackson A."/>
            <person name="Khan Z.M."/>
            <person name="Kovar-Smith C."/>
            <person name="Lewis L.R."/>
            <person name="Lozado R.J."/>
            <person name="Metzker M.L."/>
            <person name="Milosavljevic A."/>
            <person name="Miner G.R."/>
            <person name="Morgan M.B."/>
            <person name="Nazareth L.V."/>
            <person name="Scott G."/>
            <person name="Sodergren E."/>
            <person name="Song X.-Z."/>
            <person name="Steffen D."/>
            <person name="Wei S."/>
            <person name="Wheeler D.A."/>
            <person name="Wright M.W."/>
            <person name="Worley K.C."/>
            <person name="Yuan Y."/>
            <person name="Zhang Z."/>
            <person name="Adams C.Q."/>
            <person name="Ansari-Lari M.A."/>
            <person name="Ayele M."/>
            <person name="Brown M.J."/>
            <person name="Chen G."/>
            <person name="Chen Z."/>
            <person name="Clendenning J."/>
            <person name="Clerc-Blankenburg K.P."/>
            <person name="Chen R."/>
            <person name="Chen Z."/>
            <person name="Davis C."/>
            <person name="Delgado O."/>
            <person name="Dinh H.H."/>
            <person name="Dong W."/>
            <person name="Draper H."/>
            <person name="Ernst S."/>
            <person name="Fu G."/>
            <person name="Gonzalez-Garay M.L."/>
            <person name="Garcia D.K."/>
            <person name="Gillett W."/>
            <person name="Gu J."/>
            <person name="Hao B."/>
            <person name="Haugen E."/>
            <person name="Havlak P."/>
            <person name="He X."/>
            <person name="Hennig S."/>
            <person name="Hu S."/>
            <person name="Huang W."/>
            <person name="Jackson L.R."/>
            <person name="Jacob L.S."/>
            <person name="Kelly S.H."/>
            <person name="Kube M."/>
            <person name="Levy R."/>
            <person name="Li Z."/>
            <person name="Liu B."/>
            <person name="Liu J."/>
            <person name="Liu W."/>
            <person name="Lu J."/>
            <person name="Maheshwari M."/>
            <person name="Nguyen B.-V."/>
            <person name="Okwuonu G.O."/>
            <person name="Palmeiri A."/>
            <person name="Pasternak S."/>
            <person name="Perez L.M."/>
            <person name="Phelps K.A."/>
            <person name="Plopper F.J."/>
            <person name="Qiang B."/>
            <person name="Raymond C."/>
            <person name="Rodriguez R."/>
            <person name="Saenphimmachak C."/>
            <person name="Santibanez J."/>
            <person name="Shen H."/>
            <person name="Shen Y."/>
            <person name="Subramanian S."/>
            <person name="Tabor P.E."/>
            <person name="Verduzco D."/>
            <person name="Waldron L."/>
            <person name="Wang J."/>
            <person name="Wang J."/>
            <person name="Wang Q."/>
            <person name="Williams G.A."/>
            <person name="Wong G.K.-S."/>
            <person name="Yao Z."/>
            <person name="Zhang J."/>
            <person name="Zhang X."/>
            <person name="Zhao G."/>
            <person name="Zhou J."/>
            <person name="Zhou Y."/>
            <person name="Nelson D."/>
            <person name="Lehrach H."/>
            <person name="Reinhardt R."/>
            <person name="Naylor S.L."/>
            <person name="Yang H."/>
            <person name="Olson M."/>
            <person name="Weinstock G."/>
            <person name="Gibbs R.A."/>
        </authorList>
    </citation>
    <scope>NUCLEOTIDE SEQUENCE [LARGE SCALE GENOMIC DNA]</scope>
</reference>
<reference key="3">
    <citation type="journal article" date="2004" name="Clin. Chem.">
        <title>Differential gene expression of Eph receptors and ephrins in benign human tissues and cancers.</title>
        <authorList>
            <person name="Hafner C."/>
            <person name="Schmitz G."/>
            <person name="Meyer S."/>
            <person name="Bataille F."/>
            <person name="Hau P."/>
            <person name="Langmann T."/>
            <person name="Dietmaier W."/>
            <person name="Landthaler M."/>
            <person name="Vogt T."/>
        </authorList>
    </citation>
    <scope>TISSUE SPECIFICITY</scope>
</reference>
<reference key="4">
    <citation type="journal article" date="2007" name="Nature">
        <title>Patterns of somatic mutation in human cancer genomes.</title>
        <authorList>
            <person name="Greenman C."/>
            <person name="Stephens P."/>
            <person name="Smith R."/>
            <person name="Dalgliesh G.L."/>
            <person name="Hunter C."/>
            <person name="Bignell G."/>
            <person name="Davies H."/>
            <person name="Teague J."/>
            <person name="Butler A."/>
            <person name="Stevens C."/>
            <person name="Edkins S."/>
            <person name="O'Meara S."/>
            <person name="Vastrik I."/>
            <person name="Schmidt E.E."/>
            <person name="Avis T."/>
            <person name="Barthorpe S."/>
            <person name="Bhamra G."/>
            <person name="Buck G."/>
            <person name="Choudhury B."/>
            <person name="Clements J."/>
            <person name="Cole J."/>
            <person name="Dicks E."/>
            <person name="Forbes S."/>
            <person name="Gray K."/>
            <person name="Halliday K."/>
            <person name="Harrison R."/>
            <person name="Hills K."/>
            <person name="Hinton J."/>
            <person name="Jenkinson A."/>
            <person name="Jones D."/>
            <person name="Menzies A."/>
            <person name="Mironenko T."/>
            <person name="Perry J."/>
            <person name="Raine K."/>
            <person name="Richardson D."/>
            <person name="Shepherd R."/>
            <person name="Small A."/>
            <person name="Tofts C."/>
            <person name="Varian J."/>
            <person name="Webb T."/>
            <person name="West S."/>
            <person name="Widaa S."/>
            <person name="Yates A."/>
            <person name="Cahill D.P."/>
            <person name="Louis D.N."/>
            <person name="Goldstraw P."/>
            <person name="Nicholson A.G."/>
            <person name="Brasseur F."/>
            <person name="Looijenga L."/>
            <person name="Weber B.L."/>
            <person name="Chiew Y.-E."/>
            <person name="DeFazio A."/>
            <person name="Greaves M.F."/>
            <person name="Green A.R."/>
            <person name="Campbell P."/>
            <person name="Birney E."/>
            <person name="Easton D.F."/>
            <person name="Chenevix-Trench G."/>
            <person name="Tan M.-H."/>
            <person name="Khoo S.K."/>
            <person name="Teh B.T."/>
            <person name="Yuen S.T."/>
            <person name="Leung S.Y."/>
            <person name="Wooster R."/>
            <person name="Futreal P.A."/>
            <person name="Stratton M.R."/>
        </authorList>
    </citation>
    <scope>VARIANT [LARGE SCALE ANALYSIS] SER-704</scope>
</reference>
<comment type="function">
    <text evidence="1">Receptor tyrosine kinase which binds promiscuously GPI-anchored ephrin-A family ligands residing on adjacent cells, leading to contact-dependent bidirectional signaling into neighboring cells. The signaling pathway downstream of the receptor is referred to as forward signaling while the signaling pathway downstream of the ephrin ligand is referred to as reverse signaling (By similarity).</text>
</comment>
<comment type="catalytic activity">
    <reaction evidence="8">
        <text>L-tyrosyl-[protein] + ATP = O-phospho-L-tyrosyl-[protein] + ADP + H(+)</text>
        <dbReference type="Rhea" id="RHEA:10596"/>
        <dbReference type="Rhea" id="RHEA-COMP:10136"/>
        <dbReference type="Rhea" id="RHEA-COMP:20101"/>
        <dbReference type="ChEBI" id="CHEBI:15378"/>
        <dbReference type="ChEBI" id="CHEBI:30616"/>
        <dbReference type="ChEBI" id="CHEBI:46858"/>
        <dbReference type="ChEBI" id="CHEBI:61978"/>
        <dbReference type="ChEBI" id="CHEBI:456216"/>
        <dbReference type="EC" id="2.7.10.1"/>
    </reaction>
</comment>
<comment type="subunit">
    <text evidence="1 2">Heterotetramer upon binding of the ligand. The heterotetramer is composed of an ephrin dimer and a receptor dimer. Oligomerization is probably required to induce biological responses (By similarity). Interacts (via SAM domain) with ANKS1A (via SAM domain) (By similarity).</text>
</comment>
<comment type="interaction">
    <interactant intactId="EBI-3950019">
        <id>Q9UF33</id>
    </interactant>
    <interactant intactId="EBI-1383616">
        <id>Q04771</id>
        <label>ACVR1</label>
    </interactant>
    <organismsDiffer>false</organismsDiffer>
    <experiments>2</experiments>
</comment>
<comment type="interaction">
    <interactant intactId="EBI-3950019">
        <id>Q9UF33</id>
    </interactant>
    <interactant intactId="EBI-702104">
        <id>P29317</id>
        <label>EPHA2</label>
    </interactant>
    <organismsDiffer>false</organismsDiffer>
    <experiments>4</experiments>
</comment>
<comment type="interaction">
    <interactant intactId="EBI-3950019">
        <id>Q9UF33</id>
    </interactant>
    <interactant intactId="EBI-702121">
        <id>P54760</id>
        <label>EPHB4</label>
    </interactant>
    <organismsDiffer>false</organismsDiffer>
    <experiments>2</experiments>
</comment>
<comment type="subcellular location">
    <subcellularLocation>
        <location evidence="1">Membrane</location>
        <topology evidence="1">Single-pass type I membrane protein</topology>
    </subcellularLocation>
</comment>
<comment type="alternative products">
    <event type="alternative splicing"/>
    <isoform>
        <id>Q9UF33-1</id>
        <name>1</name>
        <sequence type="displayed"/>
    </isoform>
    <isoform>
        <id>Q9UF33-2</id>
        <name>2</name>
        <sequence type="described" ref="VSP_018473 VSP_018474 VSP_018475 VSP_018476"/>
    </isoform>
    <isoform>
        <id>Q9UF33-3</id>
        <name>3</name>
        <sequence type="described" ref="VSP_018473 VSP_018474 VSP_054716 VSP_054717"/>
    </isoform>
</comment>
<comment type="tissue specificity">
    <text evidence="9">Expressed in brain and testis.</text>
</comment>
<comment type="similarity">
    <text evidence="4">Belongs to the protein kinase superfamily. Tyr protein kinase family. Ephrin receptor subfamily.</text>
</comment>